<reference key="1">
    <citation type="submission" date="2000-06" db="EMBL/GenBank/DDBJ databases">
        <title>Organization of the ORF241/257 coding region from Prochlorococcus marinus SS120.</title>
        <authorList>
            <person name="Irlbacher H.M."/>
            <person name="Hess W.R."/>
        </authorList>
    </citation>
    <scope>NUCLEOTIDE SEQUENCE [GENOMIC DNA]</scope>
    <source>
        <strain>SARG / CCMP1375 / SS120</strain>
    </source>
</reference>
<reference key="2">
    <citation type="journal article" date="2003" name="Proc. Natl. Acad. Sci. U.S.A.">
        <title>Genome sequence of the cyanobacterium Prochlorococcus marinus SS120, a nearly minimal oxyphototrophic genome.</title>
        <authorList>
            <person name="Dufresne A."/>
            <person name="Salanoubat M."/>
            <person name="Partensky F."/>
            <person name="Artiguenave F."/>
            <person name="Axmann I.M."/>
            <person name="Barbe V."/>
            <person name="Duprat S."/>
            <person name="Galperin M.Y."/>
            <person name="Koonin E.V."/>
            <person name="Le Gall F."/>
            <person name="Makarova K.S."/>
            <person name="Ostrowski M."/>
            <person name="Oztas S."/>
            <person name="Robert C."/>
            <person name="Rogozin I.B."/>
            <person name="Scanlan D.J."/>
            <person name="Tandeau de Marsac N."/>
            <person name="Weissenbach J."/>
            <person name="Wincker P."/>
            <person name="Wolf Y.I."/>
            <person name="Hess W.R."/>
        </authorList>
    </citation>
    <scope>NUCLEOTIDE SEQUENCE [LARGE SCALE GENOMIC DNA]</scope>
    <source>
        <strain>SARG / CCMP1375 / SS120</strain>
    </source>
</reference>
<comment type="function">
    <text evidence="1">Catalyzes the two-electron reduction of the C2 and C3(1) diene system of 15,16-dihydrobiliverdin.</text>
</comment>
<comment type="catalytic activity">
    <reaction>
        <text>(3Z)-phycoerythrobilin + oxidized 2[4Fe-4S]-[ferredoxin] = 15,16-dihydrobiliverdin + reduced 2[4Fe-4S]-[ferredoxin] + 2 H(+)</text>
        <dbReference type="Rhea" id="RHEA:22092"/>
        <dbReference type="Rhea" id="RHEA-COMP:10002"/>
        <dbReference type="Rhea" id="RHEA-COMP:10004"/>
        <dbReference type="ChEBI" id="CHEBI:15378"/>
        <dbReference type="ChEBI" id="CHEBI:33722"/>
        <dbReference type="ChEBI" id="CHEBI:33723"/>
        <dbReference type="ChEBI" id="CHEBI:57438"/>
        <dbReference type="ChEBI" id="CHEBI:57899"/>
        <dbReference type="EC" id="1.3.7.3"/>
    </reaction>
</comment>
<comment type="similarity">
    <text evidence="2">Belongs to the HY2 family.</text>
</comment>
<evidence type="ECO:0000250" key="1"/>
<evidence type="ECO:0000305" key="2"/>
<keyword id="KW-0560">Oxidoreductase</keyword>
<keyword id="KW-1185">Reference proteome</keyword>
<accession>Q9K4U5</accession>
<dbReference type="EC" id="1.3.7.3"/>
<dbReference type="EMBL" id="AJ278499">
    <property type="protein sequence ID" value="CAB95701.1"/>
    <property type="molecule type" value="Genomic_DNA"/>
</dbReference>
<dbReference type="EMBL" id="AE017126">
    <property type="protein sequence ID" value="AAQ00792.1"/>
    <property type="molecule type" value="Genomic_DNA"/>
</dbReference>
<dbReference type="RefSeq" id="NP_876139.1">
    <property type="nucleotide sequence ID" value="NC_005042.1"/>
</dbReference>
<dbReference type="RefSeq" id="WP_011125897.1">
    <property type="nucleotide sequence ID" value="NC_005042.1"/>
</dbReference>
<dbReference type="SMR" id="Q9K4U5"/>
<dbReference type="STRING" id="167539.Pro_1748"/>
<dbReference type="EnsemblBacteria" id="AAQ00792">
    <property type="protein sequence ID" value="AAQ00792"/>
    <property type="gene ID" value="Pro_1748"/>
</dbReference>
<dbReference type="KEGG" id="pma:Pro_1748"/>
<dbReference type="PATRIC" id="fig|167539.5.peg.1846"/>
<dbReference type="eggNOG" id="ENOG502Z8GK">
    <property type="taxonomic scope" value="Bacteria"/>
</dbReference>
<dbReference type="HOGENOM" id="CLU_086208_1_0_3"/>
<dbReference type="OrthoDB" id="421401at2"/>
<dbReference type="Proteomes" id="UP000001420">
    <property type="component" value="Chromosome"/>
</dbReference>
<dbReference type="GO" id="GO:0050897">
    <property type="term" value="F:cobalt ion binding"/>
    <property type="evidence" value="ECO:0007669"/>
    <property type="project" value="InterPro"/>
</dbReference>
<dbReference type="GO" id="GO:0050618">
    <property type="term" value="F:phycoerythrobilin:ferredoxin oxidoreductase activity"/>
    <property type="evidence" value="ECO:0007669"/>
    <property type="project" value="UniProtKB-UniRule"/>
</dbReference>
<dbReference type="GO" id="GO:0010024">
    <property type="term" value="P:phytochromobilin biosynthetic process"/>
    <property type="evidence" value="ECO:0007669"/>
    <property type="project" value="InterPro"/>
</dbReference>
<dbReference type="Gene3D" id="3.40.1500.20">
    <property type="match status" value="1"/>
</dbReference>
<dbReference type="HAMAP" id="MF_00793">
    <property type="entry name" value="PebB"/>
    <property type="match status" value="1"/>
</dbReference>
<dbReference type="InterPro" id="IPR009249">
    <property type="entry name" value="Ferredoxin-dep_bilin_Rdtase"/>
</dbReference>
<dbReference type="InterPro" id="IPR022827">
    <property type="entry name" value="Phycoerythrobilin_Fdx_Rdtase"/>
</dbReference>
<dbReference type="NCBIfam" id="NF009722">
    <property type="entry name" value="PRK13249.1"/>
    <property type="match status" value="1"/>
</dbReference>
<dbReference type="PANTHER" id="PTHR34557">
    <property type="entry name" value="PHYTOCHROMOBILIN:FERREDOXIN OXIDOREDUCTASE, CHLOROPLASTIC"/>
    <property type="match status" value="1"/>
</dbReference>
<dbReference type="PANTHER" id="PTHR34557:SF1">
    <property type="entry name" value="PHYTOCHROMOBILIN:FERREDOXIN OXIDOREDUCTASE, CHLOROPLASTIC"/>
    <property type="match status" value="1"/>
</dbReference>
<dbReference type="Pfam" id="PF05996">
    <property type="entry name" value="Fe_bilin_red"/>
    <property type="match status" value="1"/>
</dbReference>
<organism>
    <name type="scientific">Prochlorococcus marinus (strain SARG / CCMP1375 / SS120)</name>
    <dbReference type="NCBI Taxonomy" id="167539"/>
    <lineage>
        <taxon>Bacteria</taxon>
        <taxon>Bacillati</taxon>
        <taxon>Cyanobacteriota</taxon>
        <taxon>Cyanophyceae</taxon>
        <taxon>Synechococcales</taxon>
        <taxon>Prochlorococcaceae</taxon>
        <taxon>Prochlorococcus</taxon>
    </lineage>
</organism>
<proteinExistence type="inferred from homology"/>
<name>PEBB_PROMA</name>
<gene>
    <name type="primary">pebB</name>
    <name type="ordered locus">Pro_1748</name>
</gene>
<protein>
    <recommendedName>
        <fullName>Phycoerythrobilin:ferredoxin oxidoreductase</fullName>
        <ecNumber>1.3.7.3</ecNumber>
    </recommendedName>
</protein>
<sequence>MIIKRDNSLSKIDLRDWIWTPFFNDLVDKLSVFEIEPYPVSHDFLSKESITGSRRNPVHVTTLTWAAKFEKIKQVRLACIKGGESLSVFNLLIHPLNDYDLPFFGADFVTLPNGHLLALDLQPALKLDNIHTENVWPRLIPLHDHWQSLLPSGGEIPKEAEPYFSPGFLWSRLPLSKESDNIISEILRPAFGEYLSLYIELLHIAKPLKKERALKILEGQKAYINYRSTKDPARAMLCRFYGKEWTEDYIHKVLFNI</sequence>
<feature type="chain" id="PRO_0000216733" description="Phycoerythrobilin:ferredoxin oxidoreductase">
    <location>
        <begin position="1"/>
        <end position="257"/>
    </location>
</feature>